<accession>A6U816</accession>
<comment type="function">
    <text evidence="1">Could be a nuclease involved in processing of the 5'-end of pre-16S rRNA.</text>
</comment>
<comment type="subcellular location">
    <subcellularLocation>
        <location evidence="1">Cytoplasm</location>
    </subcellularLocation>
</comment>
<comment type="similarity">
    <text evidence="1">Belongs to the YqgF nuclease family.</text>
</comment>
<evidence type="ECO:0000255" key="1">
    <source>
        <dbReference type="HAMAP-Rule" id="MF_00651"/>
    </source>
</evidence>
<name>YQGF_SINMW</name>
<feature type="chain" id="PRO_1000061568" description="Putative pre-16S rRNA nuclease">
    <location>
        <begin position="1"/>
        <end position="165"/>
    </location>
</feature>
<dbReference type="EC" id="3.1.-.-" evidence="1"/>
<dbReference type="EMBL" id="CP000738">
    <property type="protein sequence ID" value="ABR59796.1"/>
    <property type="molecule type" value="Genomic_DNA"/>
</dbReference>
<dbReference type="RefSeq" id="WP_011975132.1">
    <property type="nucleotide sequence ID" value="NC_009636.1"/>
</dbReference>
<dbReference type="RefSeq" id="YP_001326631.1">
    <property type="nucleotide sequence ID" value="NC_009636.1"/>
</dbReference>
<dbReference type="SMR" id="A6U816"/>
<dbReference type="STRING" id="366394.Smed_0941"/>
<dbReference type="KEGG" id="smd:Smed_0941"/>
<dbReference type="PATRIC" id="fig|366394.8.peg.4057"/>
<dbReference type="eggNOG" id="COG0816">
    <property type="taxonomic scope" value="Bacteria"/>
</dbReference>
<dbReference type="HOGENOM" id="CLU_098240_1_1_5"/>
<dbReference type="OrthoDB" id="9796140at2"/>
<dbReference type="Proteomes" id="UP000001108">
    <property type="component" value="Chromosome"/>
</dbReference>
<dbReference type="GO" id="GO:0005829">
    <property type="term" value="C:cytosol"/>
    <property type="evidence" value="ECO:0007669"/>
    <property type="project" value="TreeGrafter"/>
</dbReference>
<dbReference type="GO" id="GO:0004518">
    <property type="term" value="F:nuclease activity"/>
    <property type="evidence" value="ECO:0007669"/>
    <property type="project" value="UniProtKB-KW"/>
</dbReference>
<dbReference type="GO" id="GO:0000967">
    <property type="term" value="P:rRNA 5'-end processing"/>
    <property type="evidence" value="ECO:0007669"/>
    <property type="project" value="UniProtKB-UniRule"/>
</dbReference>
<dbReference type="CDD" id="cd16964">
    <property type="entry name" value="YqgF"/>
    <property type="match status" value="1"/>
</dbReference>
<dbReference type="Gene3D" id="3.30.420.140">
    <property type="entry name" value="YqgF/RNase H-like domain"/>
    <property type="match status" value="1"/>
</dbReference>
<dbReference type="HAMAP" id="MF_00651">
    <property type="entry name" value="Nuclease_YqgF"/>
    <property type="match status" value="1"/>
</dbReference>
<dbReference type="InterPro" id="IPR012337">
    <property type="entry name" value="RNaseH-like_sf"/>
</dbReference>
<dbReference type="InterPro" id="IPR005227">
    <property type="entry name" value="YqgF"/>
</dbReference>
<dbReference type="InterPro" id="IPR006641">
    <property type="entry name" value="YqgF/RNaseH-like_dom"/>
</dbReference>
<dbReference type="InterPro" id="IPR037027">
    <property type="entry name" value="YqgF/RNaseH-like_dom_sf"/>
</dbReference>
<dbReference type="NCBIfam" id="TIGR00250">
    <property type="entry name" value="RNAse_H_YqgF"/>
    <property type="match status" value="1"/>
</dbReference>
<dbReference type="PANTHER" id="PTHR33317">
    <property type="entry name" value="POLYNUCLEOTIDYL TRANSFERASE, RIBONUCLEASE H-LIKE SUPERFAMILY PROTEIN"/>
    <property type="match status" value="1"/>
</dbReference>
<dbReference type="PANTHER" id="PTHR33317:SF4">
    <property type="entry name" value="POLYNUCLEOTIDYL TRANSFERASE, RIBONUCLEASE H-LIKE SUPERFAMILY PROTEIN"/>
    <property type="match status" value="1"/>
</dbReference>
<dbReference type="Pfam" id="PF03652">
    <property type="entry name" value="RuvX"/>
    <property type="match status" value="1"/>
</dbReference>
<dbReference type="SMART" id="SM00732">
    <property type="entry name" value="YqgFc"/>
    <property type="match status" value="1"/>
</dbReference>
<dbReference type="SUPFAM" id="SSF53098">
    <property type="entry name" value="Ribonuclease H-like"/>
    <property type="match status" value="1"/>
</dbReference>
<gene>
    <name type="ordered locus">Smed_0941</name>
</gene>
<sequence length="165" mass="17970">MAILTIEELAERLPPYQAVAGLDLGTKTIGLSVSDLGRRFATPRDVIRRVKFGIDAQALLFFAEKEKVAAFVIGLPVNMDGSEGPRCQATRAFVRTMGERTDIPSVLWDERLSTVAAERVLIEMDVSRKKRADRIDSAAASFILQGALDRLALLARGASGDRDAP</sequence>
<organism>
    <name type="scientific">Sinorhizobium medicae (strain WSM419)</name>
    <name type="common">Ensifer medicae</name>
    <dbReference type="NCBI Taxonomy" id="366394"/>
    <lineage>
        <taxon>Bacteria</taxon>
        <taxon>Pseudomonadati</taxon>
        <taxon>Pseudomonadota</taxon>
        <taxon>Alphaproteobacteria</taxon>
        <taxon>Hyphomicrobiales</taxon>
        <taxon>Rhizobiaceae</taxon>
        <taxon>Sinorhizobium/Ensifer group</taxon>
        <taxon>Sinorhizobium</taxon>
    </lineage>
</organism>
<protein>
    <recommendedName>
        <fullName evidence="1">Putative pre-16S rRNA nuclease</fullName>
        <ecNumber evidence="1">3.1.-.-</ecNumber>
    </recommendedName>
</protein>
<keyword id="KW-0963">Cytoplasm</keyword>
<keyword id="KW-0378">Hydrolase</keyword>
<keyword id="KW-0540">Nuclease</keyword>
<keyword id="KW-0690">Ribosome biogenesis</keyword>
<proteinExistence type="inferred from homology"/>
<reference key="1">
    <citation type="submission" date="2007-06" db="EMBL/GenBank/DDBJ databases">
        <title>Complete sequence of Sinorhizobium medicae WSM419 chromosome.</title>
        <authorList>
            <consortium name="US DOE Joint Genome Institute"/>
            <person name="Copeland A."/>
            <person name="Lucas S."/>
            <person name="Lapidus A."/>
            <person name="Barry K."/>
            <person name="Glavina del Rio T."/>
            <person name="Dalin E."/>
            <person name="Tice H."/>
            <person name="Pitluck S."/>
            <person name="Chain P."/>
            <person name="Malfatti S."/>
            <person name="Shin M."/>
            <person name="Vergez L."/>
            <person name="Schmutz J."/>
            <person name="Larimer F."/>
            <person name="Land M."/>
            <person name="Hauser L."/>
            <person name="Kyrpides N."/>
            <person name="Mikhailova N."/>
            <person name="Reeve W.G."/>
            <person name="Richardson P."/>
        </authorList>
    </citation>
    <scope>NUCLEOTIDE SEQUENCE [LARGE SCALE GENOMIC DNA]</scope>
    <source>
        <strain>WSM419</strain>
    </source>
</reference>